<reference key="1">
    <citation type="journal article" date="2006" name="BMC Genomics">
        <title>The genome of the square archaeon Haloquadratum walsbyi: life at the limits of water activity.</title>
        <authorList>
            <person name="Bolhuis H."/>
            <person name="Palm P."/>
            <person name="Wende A."/>
            <person name="Falb M."/>
            <person name="Rampp M."/>
            <person name="Rodriguez-Valera F."/>
            <person name="Pfeiffer F."/>
            <person name="Oesterhelt D."/>
        </authorList>
    </citation>
    <scope>NUCLEOTIDE SEQUENCE [LARGE SCALE GENOMIC DNA]</scope>
    <source>
        <strain>DSM 16790 / HBSQ001</strain>
    </source>
</reference>
<sequence>MTQQTQQPEVNIGLVGHVDHGKTTLVQALSGSWTDQHSEEMKRGISIRLGYADATFRMISNINPPEGYTVDETGPDGEPTETLRTVSFVDAPGHETLMATMLSGAAIMDGAVLVVSATEDVPQAQTEEHLMALDIIGIENVVIAQNKIDLVDRERAIESHNQIQSFVEGTVAEDAPIVPVSAQQAVNIDLLIDAIEREIPTPERDADTSPRLYAARSFDINRPGTTWKNLSGGVIGGSVSRGRLETGAEIELRPGREVDQGGQVEWQPIITDVRSLQAGGESVSEVTPGGLCGVGTGLDPSLTKGDSLAGQIVGEPGTLPPTRESFTMTVELLDRVVGDEAGEVETISTGEPLMLTVGTATTVGAVTSARSGEAEVSLKRPVCAEEGSKIAINRRVGARWRLIGIGTLE</sequence>
<name>IF2G_HALWD</name>
<protein>
    <recommendedName>
        <fullName evidence="1">Translation initiation factor 2 subunit gamma</fullName>
        <ecNumber evidence="1">3.6.5.3</ecNumber>
    </recommendedName>
    <alternativeName>
        <fullName evidence="1">aIF2-gamma</fullName>
    </alternativeName>
    <alternativeName>
        <fullName evidence="1">eIF-2-gamma</fullName>
    </alternativeName>
</protein>
<evidence type="ECO:0000255" key="1">
    <source>
        <dbReference type="HAMAP-Rule" id="MF_00119"/>
    </source>
</evidence>
<keyword id="KW-0342">GTP-binding</keyword>
<keyword id="KW-0378">Hydrolase</keyword>
<keyword id="KW-0396">Initiation factor</keyword>
<keyword id="KW-0460">Magnesium</keyword>
<keyword id="KW-0479">Metal-binding</keyword>
<keyword id="KW-0547">Nucleotide-binding</keyword>
<keyword id="KW-0648">Protein biosynthesis</keyword>
<keyword id="KW-1185">Reference proteome</keyword>
<comment type="function">
    <text evidence="1">eIF-2 functions in the early steps of protein synthesis by forming a ternary complex with GTP and initiator tRNA.</text>
</comment>
<comment type="catalytic activity">
    <reaction evidence="1">
        <text>GTP + H2O = GDP + phosphate + H(+)</text>
        <dbReference type="Rhea" id="RHEA:19669"/>
        <dbReference type="ChEBI" id="CHEBI:15377"/>
        <dbReference type="ChEBI" id="CHEBI:15378"/>
        <dbReference type="ChEBI" id="CHEBI:37565"/>
        <dbReference type="ChEBI" id="CHEBI:43474"/>
        <dbReference type="ChEBI" id="CHEBI:58189"/>
        <dbReference type="EC" id="3.6.5.3"/>
    </reaction>
</comment>
<comment type="cofactor">
    <cofactor evidence="1">
        <name>Mg(2+)</name>
        <dbReference type="ChEBI" id="CHEBI:18420"/>
    </cofactor>
</comment>
<comment type="subunit">
    <text evidence="1">Heterotrimer composed of an alpha, a beta and a gamma chain.</text>
</comment>
<comment type="similarity">
    <text evidence="1">Belongs to the TRAFAC class translation factor GTPase superfamily. Classic translation factor GTPase family. EIF2G subfamily.</text>
</comment>
<accession>Q18KI6</accession>
<gene>
    <name evidence="1" type="primary">eif2g</name>
    <name type="ordered locus">HQ_1335A</name>
</gene>
<dbReference type="EC" id="3.6.5.3" evidence="1"/>
<dbReference type="EMBL" id="AM180088">
    <property type="protein sequence ID" value="CAJ51463.1"/>
    <property type="molecule type" value="Genomic_DNA"/>
</dbReference>
<dbReference type="RefSeq" id="WP_011570620.1">
    <property type="nucleotide sequence ID" value="NC_008212.1"/>
</dbReference>
<dbReference type="SMR" id="Q18KI6"/>
<dbReference type="STRING" id="362976.HQ_1335A"/>
<dbReference type="GeneID" id="4194784"/>
<dbReference type="KEGG" id="hwa:HQ_1335A"/>
<dbReference type="eggNOG" id="arCOG01563">
    <property type="taxonomic scope" value="Archaea"/>
</dbReference>
<dbReference type="HOGENOM" id="CLU_027154_0_1_2"/>
<dbReference type="Proteomes" id="UP000001975">
    <property type="component" value="Chromosome"/>
</dbReference>
<dbReference type="GO" id="GO:0005829">
    <property type="term" value="C:cytosol"/>
    <property type="evidence" value="ECO:0007669"/>
    <property type="project" value="TreeGrafter"/>
</dbReference>
<dbReference type="GO" id="GO:0005525">
    <property type="term" value="F:GTP binding"/>
    <property type="evidence" value="ECO:0007669"/>
    <property type="project" value="UniProtKB-UniRule"/>
</dbReference>
<dbReference type="GO" id="GO:0003924">
    <property type="term" value="F:GTPase activity"/>
    <property type="evidence" value="ECO:0007669"/>
    <property type="project" value="InterPro"/>
</dbReference>
<dbReference type="GO" id="GO:0046872">
    <property type="term" value="F:metal ion binding"/>
    <property type="evidence" value="ECO:0007669"/>
    <property type="project" value="UniProtKB-KW"/>
</dbReference>
<dbReference type="GO" id="GO:0003746">
    <property type="term" value="F:translation elongation factor activity"/>
    <property type="evidence" value="ECO:0007669"/>
    <property type="project" value="UniProtKB-UniRule"/>
</dbReference>
<dbReference type="GO" id="GO:0003743">
    <property type="term" value="F:translation initiation factor activity"/>
    <property type="evidence" value="ECO:0007669"/>
    <property type="project" value="UniProtKB-KW"/>
</dbReference>
<dbReference type="GO" id="GO:0000049">
    <property type="term" value="F:tRNA binding"/>
    <property type="evidence" value="ECO:0007669"/>
    <property type="project" value="InterPro"/>
</dbReference>
<dbReference type="GO" id="GO:0001731">
    <property type="term" value="P:formation of translation preinitiation complex"/>
    <property type="evidence" value="ECO:0007669"/>
    <property type="project" value="TreeGrafter"/>
</dbReference>
<dbReference type="CDD" id="cd01888">
    <property type="entry name" value="eIF2_gamma"/>
    <property type="match status" value="1"/>
</dbReference>
<dbReference type="CDD" id="cd03688">
    <property type="entry name" value="eIF2_gamma_II"/>
    <property type="match status" value="1"/>
</dbReference>
<dbReference type="CDD" id="cd15490">
    <property type="entry name" value="eIF2_gamma_III"/>
    <property type="match status" value="1"/>
</dbReference>
<dbReference type="FunFam" id="3.40.50.300:FF:000065">
    <property type="entry name" value="Eukaryotic translation initiation factor 2 subunit gamma"/>
    <property type="match status" value="1"/>
</dbReference>
<dbReference type="FunFam" id="2.40.30.10:FF:000075">
    <property type="entry name" value="Translation initiation factor 2 subunit gamma"/>
    <property type="match status" value="1"/>
</dbReference>
<dbReference type="Gene3D" id="3.40.50.300">
    <property type="entry name" value="P-loop containing nucleotide triphosphate hydrolases"/>
    <property type="match status" value="1"/>
</dbReference>
<dbReference type="Gene3D" id="2.40.30.10">
    <property type="entry name" value="Translation factors"/>
    <property type="match status" value="2"/>
</dbReference>
<dbReference type="HAMAP" id="MF_00119">
    <property type="entry name" value="eIF_2_gamma"/>
    <property type="match status" value="1"/>
</dbReference>
<dbReference type="InterPro" id="IPR004161">
    <property type="entry name" value="EFTu-like_2"/>
</dbReference>
<dbReference type="InterPro" id="IPR050543">
    <property type="entry name" value="eIF2G"/>
</dbReference>
<dbReference type="InterPro" id="IPR015256">
    <property type="entry name" value="eIF2g_C"/>
</dbReference>
<dbReference type="InterPro" id="IPR044127">
    <property type="entry name" value="eIF2g_dom_2"/>
</dbReference>
<dbReference type="InterPro" id="IPR044128">
    <property type="entry name" value="eIF2g_GTP-bd"/>
</dbReference>
<dbReference type="InterPro" id="IPR027417">
    <property type="entry name" value="P-loop_NTPase"/>
</dbReference>
<dbReference type="InterPro" id="IPR005225">
    <property type="entry name" value="Small_GTP-bd"/>
</dbReference>
<dbReference type="InterPro" id="IPR000795">
    <property type="entry name" value="T_Tr_GTP-bd_dom"/>
</dbReference>
<dbReference type="InterPro" id="IPR022424">
    <property type="entry name" value="TIF2_gsu"/>
</dbReference>
<dbReference type="InterPro" id="IPR009000">
    <property type="entry name" value="Transl_B-barrel_sf"/>
</dbReference>
<dbReference type="InterPro" id="IPR009001">
    <property type="entry name" value="Transl_elong_EF1A/Init_IF2_C"/>
</dbReference>
<dbReference type="NCBIfam" id="TIGR03680">
    <property type="entry name" value="eif2g_arch"/>
    <property type="match status" value="1"/>
</dbReference>
<dbReference type="NCBIfam" id="NF003077">
    <property type="entry name" value="PRK04000.1"/>
    <property type="match status" value="1"/>
</dbReference>
<dbReference type="NCBIfam" id="TIGR00231">
    <property type="entry name" value="small_GTP"/>
    <property type="match status" value="1"/>
</dbReference>
<dbReference type="PANTHER" id="PTHR42854">
    <property type="entry name" value="EUKARYOTIC TRANSLATION INITIATION FACTOR 2 SUBUNIT 3 FAMILY MEMBER"/>
    <property type="match status" value="1"/>
</dbReference>
<dbReference type="PANTHER" id="PTHR42854:SF3">
    <property type="entry name" value="EUKARYOTIC TRANSLATION INITIATION FACTOR 2 SUBUNIT 3-RELATED"/>
    <property type="match status" value="1"/>
</dbReference>
<dbReference type="Pfam" id="PF09173">
    <property type="entry name" value="eIF2_C"/>
    <property type="match status" value="1"/>
</dbReference>
<dbReference type="Pfam" id="PF00009">
    <property type="entry name" value="GTP_EFTU"/>
    <property type="match status" value="1"/>
</dbReference>
<dbReference type="Pfam" id="PF03144">
    <property type="entry name" value="GTP_EFTU_D2"/>
    <property type="match status" value="1"/>
</dbReference>
<dbReference type="PRINTS" id="PR00315">
    <property type="entry name" value="ELONGATNFCT"/>
</dbReference>
<dbReference type="SUPFAM" id="SSF50465">
    <property type="entry name" value="EF-Tu/eEF-1alpha/eIF2-gamma C-terminal domain"/>
    <property type="match status" value="1"/>
</dbReference>
<dbReference type="SUPFAM" id="SSF52540">
    <property type="entry name" value="P-loop containing nucleoside triphosphate hydrolases"/>
    <property type="match status" value="1"/>
</dbReference>
<dbReference type="SUPFAM" id="SSF50447">
    <property type="entry name" value="Translation proteins"/>
    <property type="match status" value="1"/>
</dbReference>
<dbReference type="PROSITE" id="PS51722">
    <property type="entry name" value="G_TR_2"/>
    <property type="match status" value="1"/>
</dbReference>
<organism>
    <name type="scientific">Haloquadratum walsbyi (strain DSM 16790 / HBSQ001)</name>
    <dbReference type="NCBI Taxonomy" id="362976"/>
    <lineage>
        <taxon>Archaea</taxon>
        <taxon>Methanobacteriati</taxon>
        <taxon>Methanobacteriota</taxon>
        <taxon>Stenosarchaea group</taxon>
        <taxon>Halobacteria</taxon>
        <taxon>Halobacteriales</taxon>
        <taxon>Haloferacaceae</taxon>
        <taxon>Haloquadratum</taxon>
    </lineage>
</organism>
<proteinExistence type="inferred from homology"/>
<feature type="chain" id="PRO_1000015787" description="Translation initiation factor 2 subunit gamma">
    <location>
        <begin position="1"/>
        <end position="409"/>
    </location>
</feature>
<feature type="domain" description="tr-type G" evidence="1">
    <location>
        <begin position="7"/>
        <end position="203"/>
    </location>
</feature>
<feature type="region of interest" description="G1" evidence="1">
    <location>
        <begin position="16"/>
        <end position="23"/>
    </location>
</feature>
<feature type="region of interest" description="G2" evidence="1">
    <location>
        <begin position="44"/>
        <end position="48"/>
    </location>
</feature>
<feature type="region of interest" description="G3" evidence="1">
    <location>
        <begin position="90"/>
        <end position="93"/>
    </location>
</feature>
<feature type="region of interest" description="G4" evidence="1">
    <location>
        <begin position="146"/>
        <end position="149"/>
    </location>
</feature>
<feature type="region of interest" description="G5" evidence="1">
    <location>
        <begin position="181"/>
        <end position="183"/>
    </location>
</feature>
<feature type="binding site" evidence="1">
    <location>
        <begin position="19"/>
        <end position="24"/>
    </location>
    <ligand>
        <name>GTP</name>
        <dbReference type="ChEBI" id="CHEBI:37565"/>
    </ligand>
</feature>
<feature type="binding site" evidence="1">
    <location>
        <position position="19"/>
    </location>
    <ligand>
        <name>Mg(2+)</name>
        <dbReference type="ChEBI" id="CHEBI:18420"/>
        <label>2</label>
    </ligand>
</feature>
<feature type="binding site" evidence="1">
    <location>
        <position position="23"/>
    </location>
    <ligand>
        <name>Mg(2+)</name>
        <dbReference type="ChEBI" id="CHEBI:18420"/>
        <label>1</label>
    </ligand>
</feature>
<feature type="binding site" evidence="1">
    <location>
        <position position="44"/>
    </location>
    <ligand>
        <name>Mg(2+)</name>
        <dbReference type="ChEBI" id="CHEBI:18420"/>
        <label>2</label>
    </ligand>
</feature>
<feature type="binding site" evidence="1">
    <location>
        <position position="46"/>
    </location>
    <ligand>
        <name>Mg(2+)</name>
        <dbReference type="ChEBI" id="CHEBI:18420"/>
        <label>1</label>
    </ligand>
</feature>
<feature type="binding site" evidence="1">
    <location>
        <begin position="146"/>
        <end position="149"/>
    </location>
    <ligand>
        <name>GTP</name>
        <dbReference type="ChEBI" id="CHEBI:37565"/>
    </ligand>
</feature>
<feature type="binding site" evidence="1">
    <location>
        <begin position="181"/>
        <end position="183"/>
    </location>
    <ligand>
        <name>GTP</name>
        <dbReference type="ChEBI" id="CHEBI:37565"/>
    </ligand>
</feature>